<protein>
    <recommendedName>
        <fullName evidence="1">Peptide chain release factor 3</fullName>
        <shortName evidence="1">RF-3</shortName>
    </recommendedName>
</protein>
<keyword id="KW-0963">Cytoplasm</keyword>
<keyword id="KW-0342">GTP-binding</keyword>
<keyword id="KW-0547">Nucleotide-binding</keyword>
<keyword id="KW-0648">Protein biosynthesis</keyword>
<keyword id="KW-1185">Reference proteome</keyword>
<sequence>MSNAPFMQEVARRRTFAIISHPDAGKTTITEKVLLFGQAIQTAGTVKGRGSNQHAKSDWMEMEKQRGISITTSVMQFPYRGSLVNLLDTPGHEDFSEDTYRTLTAVDCCLMVIDAAKGVEDRTRKLMEVTRLRDTPILTFMNKLDRDIRDPMEVMDEVESELKIACAPITWPVGCGKLFKGVYHLYKDETYLYQSGKGHTIQEVRIVKGLGNPELDAAIGDELAAQLRDELELVQGASHEFDRDAFLNGKLSPVFFGTALGNFGVDHMLDGLVEWAPSPMPRNTDLRTVTATDEKFTGFVFKIQANMDPKHRDRVAFMRVVSGKYEKGMKLRQVRTGKDVVIADALTFMAGDRSHVEEAYPGDIIGLHNHGTIQIGDTFTQGENMKFTGIPNFAPELFRRIRLRDPLKQKQLLKGLVQLSEEGAVQVFRPVHNNDLIVGAVGVLQFDVVVARLKSEYNVEAIYEAINVSTARWVECDDVKKFDEFQRKNEINLALDGGDNLTYIAPTMVNLNITQERYPDVVFRKTREH</sequence>
<comment type="function">
    <text evidence="1">Increases the formation of ribosomal termination complexes and stimulates activities of RF-1 and RF-2. It binds guanine nucleotides and has strong preference for UGA stop codons. It may interact directly with the ribosome. The stimulation of RF-1 and RF-2 is significantly reduced by GTP and GDP, but not by GMP.</text>
</comment>
<comment type="subcellular location">
    <subcellularLocation>
        <location evidence="1">Cytoplasm</location>
    </subcellularLocation>
</comment>
<comment type="similarity">
    <text evidence="1">Belongs to the TRAFAC class translation factor GTPase superfamily. Classic translation factor GTPase family. PrfC subfamily.</text>
</comment>
<dbReference type="EMBL" id="CU468135">
    <property type="protein sequence ID" value="CAO95707.1"/>
    <property type="molecule type" value="Genomic_DNA"/>
</dbReference>
<dbReference type="RefSeq" id="WP_012440410.1">
    <property type="nucleotide sequence ID" value="NC_010694.1"/>
</dbReference>
<dbReference type="SMR" id="B2VH43"/>
<dbReference type="STRING" id="465817.ETA_06610"/>
<dbReference type="KEGG" id="eta:ETA_06610"/>
<dbReference type="eggNOG" id="COG4108">
    <property type="taxonomic scope" value="Bacteria"/>
</dbReference>
<dbReference type="HOGENOM" id="CLU_002794_2_1_6"/>
<dbReference type="OrthoDB" id="9804431at2"/>
<dbReference type="Proteomes" id="UP000001726">
    <property type="component" value="Chromosome"/>
</dbReference>
<dbReference type="GO" id="GO:0005829">
    <property type="term" value="C:cytosol"/>
    <property type="evidence" value="ECO:0007669"/>
    <property type="project" value="TreeGrafter"/>
</dbReference>
<dbReference type="GO" id="GO:0005525">
    <property type="term" value="F:GTP binding"/>
    <property type="evidence" value="ECO:0007669"/>
    <property type="project" value="UniProtKB-UniRule"/>
</dbReference>
<dbReference type="GO" id="GO:0003924">
    <property type="term" value="F:GTPase activity"/>
    <property type="evidence" value="ECO:0007669"/>
    <property type="project" value="InterPro"/>
</dbReference>
<dbReference type="GO" id="GO:0097216">
    <property type="term" value="F:guanosine tetraphosphate binding"/>
    <property type="evidence" value="ECO:0007669"/>
    <property type="project" value="UniProtKB-ARBA"/>
</dbReference>
<dbReference type="GO" id="GO:0016150">
    <property type="term" value="F:translation release factor activity, codon nonspecific"/>
    <property type="evidence" value="ECO:0007669"/>
    <property type="project" value="TreeGrafter"/>
</dbReference>
<dbReference type="GO" id="GO:0016149">
    <property type="term" value="F:translation release factor activity, codon specific"/>
    <property type="evidence" value="ECO:0007669"/>
    <property type="project" value="UniProtKB-UniRule"/>
</dbReference>
<dbReference type="GO" id="GO:0006449">
    <property type="term" value="P:regulation of translational termination"/>
    <property type="evidence" value="ECO:0007669"/>
    <property type="project" value="UniProtKB-UniRule"/>
</dbReference>
<dbReference type="CDD" id="cd04169">
    <property type="entry name" value="RF3"/>
    <property type="match status" value="1"/>
</dbReference>
<dbReference type="CDD" id="cd03689">
    <property type="entry name" value="RF3_II"/>
    <property type="match status" value="1"/>
</dbReference>
<dbReference type="CDD" id="cd16259">
    <property type="entry name" value="RF3_III"/>
    <property type="match status" value="1"/>
</dbReference>
<dbReference type="FunFam" id="2.40.30.10:FF:000040">
    <property type="entry name" value="Peptide chain release factor 3"/>
    <property type="match status" value="1"/>
</dbReference>
<dbReference type="FunFam" id="3.30.70.3280:FF:000001">
    <property type="entry name" value="Peptide chain release factor 3"/>
    <property type="match status" value="1"/>
</dbReference>
<dbReference type="FunFam" id="3.40.50.300:FF:000184">
    <property type="entry name" value="Peptide chain release factor 3"/>
    <property type="match status" value="1"/>
</dbReference>
<dbReference type="FunFam" id="3.40.50.300:FF:000253">
    <property type="entry name" value="Peptide chain release factor 3"/>
    <property type="match status" value="1"/>
</dbReference>
<dbReference type="Gene3D" id="3.40.50.300">
    <property type="entry name" value="P-loop containing nucleotide triphosphate hydrolases"/>
    <property type="match status" value="2"/>
</dbReference>
<dbReference type="Gene3D" id="3.30.70.3280">
    <property type="entry name" value="Peptide chain release factor 3, domain III"/>
    <property type="match status" value="1"/>
</dbReference>
<dbReference type="HAMAP" id="MF_00072">
    <property type="entry name" value="Rel_fac_3"/>
    <property type="match status" value="1"/>
</dbReference>
<dbReference type="InterPro" id="IPR053905">
    <property type="entry name" value="EF-G-like_DII"/>
</dbReference>
<dbReference type="InterPro" id="IPR035647">
    <property type="entry name" value="EFG_III/V"/>
</dbReference>
<dbReference type="InterPro" id="IPR031157">
    <property type="entry name" value="G_TR_CS"/>
</dbReference>
<dbReference type="InterPro" id="IPR027417">
    <property type="entry name" value="P-loop_NTPase"/>
</dbReference>
<dbReference type="InterPro" id="IPR004548">
    <property type="entry name" value="PrfC"/>
</dbReference>
<dbReference type="InterPro" id="IPR032090">
    <property type="entry name" value="RF3_C"/>
</dbReference>
<dbReference type="InterPro" id="IPR038467">
    <property type="entry name" value="RF3_dom_3_sf"/>
</dbReference>
<dbReference type="InterPro" id="IPR041732">
    <property type="entry name" value="RF3_GTP-bd"/>
</dbReference>
<dbReference type="InterPro" id="IPR005225">
    <property type="entry name" value="Small_GTP-bd"/>
</dbReference>
<dbReference type="InterPro" id="IPR000795">
    <property type="entry name" value="T_Tr_GTP-bd_dom"/>
</dbReference>
<dbReference type="InterPro" id="IPR009000">
    <property type="entry name" value="Transl_B-barrel_sf"/>
</dbReference>
<dbReference type="NCBIfam" id="TIGR00503">
    <property type="entry name" value="prfC"/>
    <property type="match status" value="1"/>
</dbReference>
<dbReference type="NCBIfam" id="NF001964">
    <property type="entry name" value="PRK00741.1"/>
    <property type="match status" value="1"/>
</dbReference>
<dbReference type="NCBIfam" id="TIGR00231">
    <property type="entry name" value="small_GTP"/>
    <property type="match status" value="1"/>
</dbReference>
<dbReference type="PANTHER" id="PTHR43556">
    <property type="entry name" value="PEPTIDE CHAIN RELEASE FACTOR RF3"/>
    <property type="match status" value="1"/>
</dbReference>
<dbReference type="PANTHER" id="PTHR43556:SF2">
    <property type="entry name" value="PEPTIDE CHAIN RELEASE FACTOR RF3"/>
    <property type="match status" value="1"/>
</dbReference>
<dbReference type="Pfam" id="PF22042">
    <property type="entry name" value="EF-G_D2"/>
    <property type="match status" value="1"/>
</dbReference>
<dbReference type="Pfam" id="PF00009">
    <property type="entry name" value="GTP_EFTU"/>
    <property type="match status" value="1"/>
</dbReference>
<dbReference type="Pfam" id="PF16658">
    <property type="entry name" value="RF3_C"/>
    <property type="match status" value="1"/>
</dbReference>
<dbReference type="PRINTS" id="PR00315">
    <property type="entry name" value="ELONGATNFCT"/>
</dbReference>
<dbReference type="SUPFAM" id="SSF54980">
    <property type="entry name" value="EF-G C-terminal domain-like"/>
    <property type="match status" value="1"/>
</dbReference>
<dbReference type="SUPFAM" id="SSF52540">
    <property type="entry name" value="P-loop containing nucleoside triphosphate hydrolases"/>
    <property type="match status" value="1"/>
</dbReference>
<dbReference type="SUPFAM" id="SSF50447">
    <property type="entry name" value="Translation proteins"/>
    <property type="match status" value="1"/>
</dbReference>
<dbReference type="PROSITE" id="PS00301">
    <property type="entry name" value="G_TR_1"/>
    <property type="match status" value="1"/>
</dbReference>
<dbReference type="PROSITE" id="PS51722">
    <property type="entry name" value="G_TR_2"/>
    <property type="match status" value="1"/>
</dbReference>
<evidence type="ECO:0000255" key="1">
    <source>
        <dbReference type="HAMAP-Rule" id="MF_00072"/>
    </source>
</evidence>
<proteinExistence type="inferred from homology"/>
<gene>
    <name evidence="1" type="primary">prfC</name>
    <name type="ordered locus">ETA_06610</name>
</gene>
<reference key="1">
    <citation type="journal article" date="2008" name="Environ. Microbiol.">
        <title>The genome of Erwinia tasmaniensis strain Et1/99, a non-pathogenic bacterium in the genus Erwinia.</title>
        <authorList>
            <person name="Kube M."/>
            <person name="Migdoll A.M."/>
            <person name="Mueller I."/>
            <person name="Kuhl H."/>
            <person name="Beck A."/>
            <person name="Reinhardt R."/>
            <person name="Geider K."/>
        </authorList>
    </citation>
    <scope>NUCLEOTIDE SEQUENCE [LARGE SCALE GENOMIC DNA]</scope>
    <source>
        <strain>DSM 17950 / CFBP 7177 / CIP 109463 / NCPPB 4357 / Et1/99</strain>
    </source>
</reference>
<accession>B2VH43</accession>
<feature type="chain" id="PRO_1000092484" description="Peptide chain release factor 3">
    <location>
        <begin position="1"/>
        <end position="529"/>
    </location>
</feature>
<feature type="domain" description="tr-type G">
    <location>
        <begin position="11"/>
        <end position="280"/>
    </location>
</feature>
<feature type="binding site" evidence="1">
    <location>
        <begin position="20"/>
        <end position="27"/>
    </location>
    <ligand>
        <name>GTP</name>
        <dbReference type="ChEBI" id="CHEBI:37565"/>
    </ligand>
</feature>
<feature type="binding site" evidence="1">
    <location>
        <begin position="88"/>
        <end position="92"/>
    </location>
    <ligand>
        <name>GTP</name>
        <dbReference type="ChEBI" id="CHEBI:37565"/>
    </ligand>
</feature>
<feature type="binding site" evidence="1">
    <location>
        <begin position="142"/>
        <end position="145"/>
    </location>
    <ligand>
        <name>GTP</name>
        <dbReference type="ChEBI" id="CHEBI:37565"/>
    </ligand>
</feature>
<organism>
    <name type="scientific">Erwinia tasmaniensis (strain DSM 17950 / CFBP 7177 / CIP 109463 / NCPPB 4357 / Et1/99)</name>
    <dbReference type="NCBI Taxonomy" id="465817"/>
    <lineage>
        <taxon>Bacteria</taxon>
        <taxon>Pseudomonadati</taxon>
        <taxon>Pseudomonadota</taxon>
        <taxon>Gammaproteobacteria</taxon>
        <taxon>Enterobacterales</taxon>
        <taxon>Erwiniaceae</taxon>
        <taxon>Erwinia</taxon>
    </lineage>
</organism>
<name>RF3_ERWT9</name>